<organism>
    <name type="scientific">Buchnera aphidicola subsp. Baizongia pistaciae (strain Bp)</name>
    <dbReference type="NCBI Taxonomy" id="224915"/>
    <lineage>
        <taxon>Bacteria</taxon>
        <taxon>Pseudomonadati</taxon>
        <taxon>Pseudomonadota</taxon>
        <taxon>Gammaproteobacteria</taxon>
        <taxon>Enterobacterales</taxon>
        <taxon>Erwiniaceae</taxon>
        <taxon>Buchnera</taxon>
    </lineage>
</organism>
<protein>
    <recommendedName>
        <fullName evidence="1">tRNA uridine 5-carboxymethylaminomethyl modification enzyme MnmG</fullName>
    </recommendedName>
    <alternativeName>
        <fullName evidence="1">Glucose-inhibited division protein A</fullName>
    </alternativeName>
</protein>
<feature type="chain" id="PRO_0000117073" description="tRNA uridine 5-carboxymethylaminomethyl modification enzyme MnmG">
    <location>
        <begin position="1"/>
        <end position="626"/>
    </location>
</feature>
<feature type="binding site" evidence="1">
    <location>
        <begin position="13"/>
        <end position="18"/>
    </location>
    <ligand>
        <name>FAD</name>
        <dbReference type="ChEBI" id="CHEBI:57692"/>
    </ligand>
</feature>
<feature type="binding site" evidence="1">
    <location>
        <position position="125"/>
    </location>
    <ligand>
        <name>FAD</name>
        <dbReference type="ChEBI" id="CHEBI:57692"/>
    </ligand>
</feature>
<feature type="binding site" evidence="1">
    <location>
        <position position="180"/>
    </location>
    <ligand>
        <name>FAD</name>
        <dbReference type="ChEBI" id="CHEBI:57692"/>
    </ligand>
</feature>
<feature type="binding site" evidence="1">
    <location>
        <begin position="273"/>
        <end position="287"/>
    </location>
    <ligand>
        <name>NAD(+)</name>
        <dbReference type="ChEBI" id="CHEBI:57540"/>
    </ligand>
</feature>
<feature type="binding site" evidence="1">
    <location>
        <position position="370"/>
    </location>
    <ligand>
        <name>FAD</name>
        <dbReference type="ChEBI" id="CHEBI:57692"/>
    </ligand>
</feature>
<evidence type="ECO:0000255" key="1">
    <source>
        <dbReference type="HAMAP-Rule" id="MF_00129"/>
    </source>
</evidence>
<proteinExistence type="inferred from homology"/>
<dbReference type="EMBL" id="AE016826">
    <property type="protein sequence ID" value="AAO26745.1"/>
    <property type="molecule type" value="Genomic_DNA"/>
</dbReference>
<dbReference type="RefSeq" id="WP_011091146.1">
    <property type="nucleotide sequence ID" value="NC_004545.1"/>
</dbReference>
<dbReference type="SMR" id="P59485"/>
<dbReference type="STRING" id="224915.bbp_001"/>
<dbReference type="KEGG" id="bab:bbp_001"/>
<dbReference type="eggNOG" id="COG0445">
    <property type="taxonomic scope" value="Bacteria"/>
</dbReference>
<dbReference type="HOGENOM" id="CLU_007831_2_2_6"/>
<dbReference type="OrthoDB" id="9815560at2"/>
<dbReference type="Proteomes" id="UP000000601">
    <property type="component" value="Chromosome"/>
</dbReference>
<dbReference type="GO" id="GO:0005829">
    <property type="term" value="C:cytosol"/>
    <property type="evidence" value="ECO:0007669"/>
    <property type="project" value="TreeGrafter"/>
</dbReference>
<dbReference type="GO" id="GO:0050660">
    <property type="term" value="F:flavin adenine dinucleotide binding"/>
    <property type="evidence" value="ECO:0007669"/>
    <property type="project" value="UniProtKB-UniRule"/>
</dbReference>
<dbReference type="GO" id="GO:0030488">
    <property type="term" value="P:tRNA methylation"/>
    <property type="evidence" value="ECO:0007669"/>
    <property type="project" value="TreeGrafter"/>
</dbReference>
<dbReference type="GO" id="GO:0002098">
    <property type="term" value="P:tRNA wobble uridine modification"/>
    <property type="evidence" value="ECO:0007669"/>
    <property type="project" value="InterPro"/>
</dbReference>
<dbReference type="FunFam" id="1.10.10.1800:FF:000001">
    <property type="entry name" value="tRNA uridine 5-carboxymethylaminomethyl modification enzyme MnmG"/>
    <property type="match status" value="1"/>
</dbReference>
<dbReference type="FunFam" id="1.10.150.570:FF:000001">
    <property type="entry name" value="tRNA uridine 5-carboxymethylaminomethyl modification enzyme MnmG"/>
    <property type="match status" value="1"/>
</dbReference>
<dbReference type="FunFam" id="3.50.50.60:FF:000002">
    <property type="entry name" value="tRNA uridine 5-carboxymethylaminomethyl modification enzyme MnmG"/>
    <property type="match status" value="1"/>
</dbReference>
<dbReference type="FunFam" id="3.50.50.60:FF:000010">
    <property type="entry name" value="tRNA uridine 5-carboxymethylaminomethyl modification enzyme MnmG"/>
    <property type="match status" value="1"/>
</dbReference>
<dbReference type="Gene3D" id="3.50.50.60">
    <property type="entry name" value="FAD/NAD(P)-binding domain"/>
    <property type="match status" value="2"/>
</dbReference>
<dbReference type="Gene3D" id="1.10.150.570">
    <property type="entry name" value="GidA associated domain, C-terminal subdomain"/>
    <property type="match status" value="1"/>
</dbReference>
<dbReference type="Gene3D" id="1.10.10.1800">
    <property type="entry name" value="tRNA uridine 5-carboxymethylaminomethyl modification enzyme MnmG/GidA"/>
    <property type="match status" value="1"/>
</dbReference>
<dbReference type="HAMAP" id="MF_00129">
    <property type="entry name" value="MnmG_GidA"/>
    <property type="match status" value="1"/>
</dbReference>
<dbReference type="InterPro" id="IPR036188">
    <property type="entry name" value="FAD/NAD-bd_sf"/>
</dbReference>
<dbReference type="InterPro" id="IPR049312">
    <property type="entry name" value="GIDA_C_N"/>
</dbReference>
<dbReference type="InterPro" id="IPR004416">
    <property type="entry name" value="MnmG"/>
</dbReference>
<dbReference type="InterPro" id="IPR002218">
    <property type="entry name" value="MnmG-rel"/>
</dbReference>
<dbReference type="InterPro" id="IPR020595">
    <property type="entry name" value="MnmG-rel_CS"/>
</dbReference>
<dbReference type="InterPro" id="IPR026904">
    <property type="entry name" value="MnmG_C"/>
</dbReference>
<dbReference type="InterPro" id="IPR047001">
    <property type="entry name" value="MnmG_C_subdom"/>
</dbReference>
<dbReference type="InterPro" id="IPR044920">
    <property type="entry name" value="MnmG_C_subdom_sf"/>
</dbReference>
<dbReference type="InterPro" id="IPR040131">
    <property type="entry name" value="MnmG_N"/>
</dbReference>
<dbReference type="NCBIfam" id="TIGR00136">
    <property type="entry name" value="mnmG_gidA"/>
    <property type="match status" value="1"/>
</dbReference>
<dbReference type="PANTHER" id="PTHR11806">
    <property type="entry name" value="GLUCOSE INHIBITED DIVISION PROTEIN A"/>
    <property type="match status" value="1"/>
</dbReference>
<dbReference type="PANTHER" id="PTHR11806:SF0">
    <property type="entry name" value="PROTEIN MTO1 HOMOLOG, MITOCHONDRIAL"/>
    <property type="match status" value="1"/>
</dbReference>
<dbReference type="Pfam" id="PF01134">
    <property type="entry name" value="GIDA"/>
    <property type="match status" value="1"/>
</dbReference>
<dbReference type="Pfam" id="PF21680">
    <property type="entry name" value="GIDA_C_1st"/>
    <property type="match status" value="1"/>
</dbReference>
<dbReference type="Pfam" id="PF13932">
    <property type="entry name" value="SAM_GIDA_C"/>
    <property type="match status" value="1"/>
</dbReference>
<dbReference type="SMART" id="SM01228">
    <property type="entry name" value="GIDA_assoc_3"/>
    <property type="match status" value="1"/>
</dbReference>
<dbReference type="SUPFAM" id="SSF51905">
    <property type="entry name" value="FAD/NAD(P)-binding domain"/>
    <property type="match status" value="1"/>
</dbReference>
<dbReference type="PROSITE" id="PS01280">
    <property type="entry name" value="GIDA_1"/>
    <property type="match status" value="1"/>
</dbReference>
<dbReference type="PROSITE" id="PS01281">
    <property type="entry name" value="GIDA_2"/>
    <property type="match status" value="1"/>
</dbReference>
<keyword id="KW-0963">Cytoplasm</keyword>
<keyword id="KW-0274">FAD</keyword>
<keyword id="KW-0285">Flavoprotein</keyword>
<keyword id="KW-0520">NAD</keyword>
<keyword id="KW-1185">Reference proteome</keyword>
<keyword id="KW-0819">tRNA processing</keyword>
<reference key="1">
    <citation type="journal article" date="2003" name="Proc. Natl. Acad. Sci. U.S.A.">
        <title>Reductive genome evolution in Buchnera aphidicola.</title>
        <authorList>
            <person name="van Ham R.C.H.J."/>
            <person name="Kamerbeek J."/>
            <person name="Palacios C."/>
            <person name="Rausell C."/>
            <person name="Abascal F."/>
            <person name="Bastolla U."/>
            <person name="Fernandez J.M."/>
            <person name="Jimenez L."/>
            <person name="Postigo M."/>
            <person name="Silva F.J."/>
            <person name="Tamames J."/>
            <person name="Viguera E."/>
            <person name="Latorre A."/>
            <person name="Valencia A."/>
            <person name="Moran F."/>
            <person name="Moya A."/>
        </authorList>
    </citation>
    <scope>NUCLEOTIDE SEQUENCE [LARGE SCALE GENOMIC DNA]</scope>
    <source>
        <strain>Bp</strain>
    </source>
</reference>
<accession>P59485</accession>
<name>MNMG_BUCBP</name>
<sequence length="626" mass="70394">MLREQNFDVIIVGGGHAGTEAALACSRMKKKTLLLTQNINTIGALSCNPAIGGIGKSHLVKEVDALGGIMAKAIDKSGIQFRILNSKKGFAVRSTRAQADRKLYSQTIKKTLLFQENLLVLQAEVDDVIVSNYKIMGVITQTKIKFFSKAVVLTTGTFLGGKIYIGSKCFLGGRINDYSSINLAQRLKDLPIKIGRLKTGTPPRINKHTINFSKLDVQYSDNPLPIFSFMGNQKEHPRQIPCYITATNEKTHEIVRKNLKKSPIYSGLITGIGPRYCPSIEDKIVRFSDRNAHQIFLEPEGLHDIEIYPNGISTSLPEDVQVEMIHSIKGLERAQITRPGYAVEYDYCDPRTLKLTLESKFIEGFFLAGQINGTTGYEEAAAQGLLAGLNASLYASNKCGWFPNRGQAYLGVLIDDLCTKGTKEPYRMFTARAEHRLILREDNADLRLTNIAKSMNLIDNSRWTRYVEKLSNIKNETTRLENLKIRSKLYSITELNNFFSIKINTESTAKDLLKRPEINYSTLMLFKKFSPGIKDKEAYEQIEIQEKYCGYIKRQIKAIKNQLNNDYIVLSKIKNYKVVKGLSNEVVSKLNFYKPYSLGQASRISGITPAAISILLIYLKKKLYST</sequence>
<gene>
    <name evidence="1" type="primary">mnmG</name>
    <name evidence="1" type="synonym">gidA</name>
    <name type="ordered locus">bbp_001</name>
</gene>
<comment type="function">
    <text evidence="1">NAD-binding protein involved in the addition of a carboxymethylaminomethyl (cmnm) group at the wobble position (U34) of certain tRNAs, forming tRNA-cmnm(5)s(2)U34.</text>
</comment>
<comment type="cofactor">
    <cofactor evidence="1">
        <name>FAD</name>
        <dbReference type="ChEBI" id="CHEBI:57692"/>
    </cofactor>
</comment>
<comment type="subunit">
    <text evidence="1">Homodimer. Heterotetramer of two MnmE and two MnmG subunits.</text>
</comment>
<comment type="subcellular location">
    <subcellularLocation>
        <location evidence="1">Cytoplasm</location>
    </subcellularLocation>
</comment>
<comment type="similarity">
    <text evidence="1">Belongs to the MnmG family.</text>
</comment>